<gene>
    <name evidence="1" type="primary">garL</name>
    <name type="ordered locus">SeAg_B3439</name>
</gene>
<comment type="function">
    <text evidence="1">Catalyzes the reversible retro-aldol cleavage of both 5-keto-4-deoxy-D-glucarate and 2-keto-3-deoxy-D-glucarate to pyruvate and tartronic semialdehyde.</text>
</comment>
<comment type="catalytic activity">
    <reaction evidence="1">
        <text>5-dehydro-4-deoxy-D-glucarate = 2-hydroxy-3-oxopropanoate + pyruvate</text>
        <dbReference type="Rhea" id="RHEA:27726"/>
        <dbReference type="ChEBI" id="CHEBI:15361"/>
        <dbReference type="ChEBI" id="CHEBI:42819"/>
        <dbReference type="ChEBI" id="CHEBI:57978"/>
    </reaction>
</comment>
<comment type="catalytic activity">
    <reaction evidence="1">
        <text>2-dehydro-3-deoxy-D-glucarate = 2-hydroxy-3-oxopropanoate + pyruvate</text>
        <dbReference type="Rhea" id="RHEA:10268"/>
        <dbReference type="ChEBI" id="CHEBI:15361"/>
        <dbReference type="ChEBI" id="CHEBI:57978"/>
        <dbReference type="ChEBI" id="CHEBI:58098"/>
        <dbReference type="EC" id="4.1.2.20"/>
    </reaction>
</comment>
<comment type="cofactor">
    <cofactor evidence="1">
        <name>Mg(2+)</name>
        <dbReference type="ChEBI" id="CHEBI:18420"/>
    </cofactor>
    <text evidence="1">Binds 1 Mg(2+) ion per subunit.</text>
</comment>
<comment type="pathway">
    <text evidence="1">Carbohydrate acid metabolism; galactarate degradation; D-glycerate from galactarate: step 2/3.</text>
</comment>
<comment type="subunit">
    <text evidence="1">Homohexamer; trimer of dimers.</text>
</comment>
<comment type="similarity">
    <text evidence="1">Belongs to the HpcH/HpaI aldolase family. KDGluc aldolase subfamily.</text>
</comment>
<reference key="1">
    <citation type="journal article" date="2011" name="J. Bacteriol.">
        <title>Comparative genomics of 28 Salmonella enterica isolates: evidence for CRISPR-mediated adaptive sublineage evolution.</title>
        <authorList>
            <person name="Fricke W.F."/>
            <person name="Mammel M.K."/>
            <person name="McDermott P.F."/>
            <person name="Tartera C."/>
            <person name="White D.G."/>
            <person name="Leclerc J.E."/>
            <person name="Ravel J."/>
            <person name="Cebula T.A."/>
        </authorList>
    </citation>
    <scope>NUCLEOTIDE SEQUENCE [LARGE SCALE GENOMIC DNA]</scope>
    <source>
        <strain>SL483</strain>
    </source>
</reference>
<organism>
    <name type="scientific">Salmonella agona (strain SL483)</name>
    <dbReference type="NCBI Taxonomy" id="454166"/>
    <lineage>
        <taxon>Bacteria</taxon>
        <taxon>Pseudomonadati</taxon>
        <taxon>Pseudomonadota</taxon>
        <taxon>Gammaproteobacteria</taxon>
        <taxon>Enterobacterales</taxon>
        <taxon>Enterobacteriaceae</taxon>
        <taxon>Salmonella</taxon>
    </lineage>
</organism>
<proteinExistence type="inferred from homology"/>
<protein>
    <recommendedName>
        <fullName evidence="1">5-keto-4-deoxy-D-glucarate aldolase</fullName>
        <shortName evidence="1">KDGluc aldolase</shortName>
        <shortName evidence="1">KDGlucA</shortName>
        <ecNumber evidence="1">4.1.2.20</ecNumber>
    </recommendedName>
    <alternativeName>
        <fullName evidence="1">2-dehydro-3-deoxy-D-glucarate aldolase</fullName>
    </alternativeName>
    <alternativeName>
        <fullName evidence="1">2-keto-3-deoxy-D-glucarate aldolase</fullName>
    </alternativeName>
    <alternativeName>
        <fullName evidence="1">5-dehydro-4-deoxy-D-glucarate aldolase</fullName>
    </alternativeName>
    <alternativeName>
        <fullName evidence="1">Alpha-keto-beta-deoxy-D-glucarate aldolase</fullName>
    </alternativeName>
</protein>
<dbReference type="EC" id="4.1.2.20" evidence="1"/>
<dbReference type="EMBL" id="CP001138">
    <property type="protein sequence ID" value="ACH51557.1"/>
    <property type="molecule type" value="Genomic_DNA"/>
</dbReference>
<dbReference type="RefSeq" id="WP_001057715.1">
    <property type="nucleotide sequence ID" value="NC_011149.1"/>
</dbReference>
<dbReference type="SMR" id="B5F6Q5"/>
<dbReference type="KEGG" id="sea:SeAg_B3439"/>
<dbReference type="HOGENOM" id="CLU_059964_1_0_6"/>
<dbReference type="UniPathway" id="UPA00565">
    <property type="reaction ID" value="UER00630"/>
</dbReference>
<dbReference type="Proteomes" id="UP000008819">
    <property type="component" value="Chromosome"/>
</dbReference>
<dbReference type="GO" id="GO:0005737">
    <property type="term" value="C:cytoplasm"/>
    <property type="evidence" value="ECO:0007669"/>
    <property type="project" value="TreeGrafter"/>
</dbReference>
<dbReference type="GO" id="GO:0008672">
    <property type="term" value="F:2-dehydro-3-deoxyglucarate aldolase activity"/>
    <property type="evidence" value="ECO:0007669"/>
    <property type="project" value="UniProtKB-UniRule"/>
</dbReference>
<dbReference type="GO" id="GO:0000287">
    <property type="term" value="F:magnesium ion binding"/>
    <property type="evidence" value="ECO:0007669"/>
    <property type="project" value="UniProtKB-UniRule"/>
</dbReference>
<dbReference type="GO" id="GO:0042838">
    <property type="term" value="P:D-glucarate catabolic process"/>
    <property type="evidence" value="ECO:0007669"/>
    <property type="project" value="UniProtKB-UniRule"/>
</dbReference>
<dbReference type="GO" id="GO:0046392">
    <property type="term" value="P:galactarate catabolic process"/>
    <property type="evidence" value="ECO:0007669"/>
    <property type="project" value="UniProtKB-UniRule"/>
</dbReference>
<dbReference type="FunFam" id="3.20.20.60:FF:000004">
    <property type="entry name" value="5-keto-4-deoxy-D-glucarate aldolase"/>
    <property type="match status" value="1"/>
</dbReference>
<dbReference type="Gene3D" id="3.20.20.60">
    <property type="entry name" value="Phosphoenolpyruvate-binding domains"/>
    <property type="match status" value="1"/>
</dbReference>
<dbReference type="HAMAP" id="MF_01291">
    <property type="entry name" value="KDGluc_aldolase"/>
    <property type="match status" value="1"/>
</dbReference>
<dbReference type="InterPro" id="IPR005000">
    <property type="entry name" value="Aldolase/citrate-lyase_domain"/>
</dbReference>
<dbReference type="InterPro" id="IPR017648">
    <property type="entry name" value="GarL"/>
</dbReference>
<dbReference type="InterPro" id="IPR050251">
    <property type="entry name" value="HpcH-HpaI_aldolase"/>
</dbReference>
<dbReference type="InterPro" id="IPR015813">
    <property type="entry name" value="Pyrv/PenolPyrv_kinase-like_dom"/>
</dbReference>
<dbReference type="InterPro" id="IPR040442">
    <property type="entry name" value="Pyrv_kinase-like_dom_sf"/>
</dbReference>
<dbReference type="NCBIfam" id="TIGR03239">
    <property type="entry name" value="GarL"/>
    <property type="match status" value="1"/>
</dbReference>
<dbReference type="NCBIfam" id="NF007849">
    <property type="entry name" value="PRK10558.1"/>
    <property type="match status" value="1"/>
</dbReference>
<dbReference type="PANTHER" id="PTHR30502">
    <property type="entry name" value="2-KETO-3-DEOXY-L-RHAMNONATE ALDOLASE"/>
    <property type="match status" value="1"/>
</dbReference>
<dbReference type="PANTHER" id="PTHR30502:SF4">
    <property type="entry name" value="5-KETO-4-DEOXY-D-GLUCARATE ALDOLASE"/>
    <property type="match status" value="1"/>
</dbReference>
<dbReference type="Pfam" id="PF03328">
    <property type="entry name" value="HpcH_HpaI"/>
    <property type="match status" value="1"/>
</dbReference>
<dbReference type="SUPFAM" id="SSF51621">
    <property type="entry name" value="Phosphoenolpyruvate/pyruvate domain"/>
    <property type="match status" value="1"/>
</dbReference>
<feature type="chain" id="PRO_1000140411" description="5-keto-4-deoxy-D-glucarate aldolase">
    <location>
        <begin position="1"/>
        <end position="256"/>
    </location>
</feature>
<feature type="active site" description="Proton acceptor" evidence="1">
    <location>
        <position position="50"/>
    </location>
</feature>
<feature type="binding site" evidence="1">
    <location>
        <position position="151"/>
    </location>
    <ligand>
        <name>substrate</name>
    </ligand>
</feature>
<feature type="binding site" evidence="1">
    <location>
        <position position="153"/>
    </location>
    <ligand>
        <name>Mg(2+)</name>
        <dbReference type="ChEBI" id="CHEBI:18420"/>
    </ligand>
</feature>
<feature type="binding site" evidence="1">
    <location>
        <position position="178"/>
    </location>
    <ligand>
        <name>substrate</name>
    </ligand>
</feature>
<feature type="binding site" evidence="1">
    <location>
        <position position="179"/>
    </location>
    <ligand>
        <name>Mg(2+)</name>
        <dbReference type="ChEBI" id="CHEBI:18420"/>
    </ligand>
</feature>
<feature type="binding site" evidence="1">
    <location>
        <position position="179"/>
    </location>
    <ligand>
        <name>substrate</name>
    </ligand>
</feature>
<feature type="site" description="Transition state stabilizer" evidence="1">
    <location>
        <position position="75"/>
    </location>
</feature>
<feature type="site" description="Increases basicity of active site His" evidence="1">
    <location>
        <position position="89"/>
    </location>
</feature>
<accession>B5F6Q5</accession>
<name>GARL_SALA4</name>
<keyword id="KW-0456">Lyase</keyword>
<keyword id="KW-0460">Magnesium</keyword>
<keyword id="KW-0479">Metal-binding</keyword>
<evidence type="ECO:0000255" key="1">
    <source>
        <dbReference type="HAMAP-Rule" id="MF_01291"/>
    </source>
</evidence>
<sequence>MNNAIFPNKFKAALAAQQVQIGCWSALASPITTEVLGLAGFDWLVLDGEHAPNDVTTLIPQLMALKGSASAPVVRVPTNEPVIIKRMLDIGFYNFLIPFVETQEEAARAVASTRYPPEGIRGVSVSHRANMFGTVPDYFAQSNKNITIIVQIESQLGVDNVDAIAATEGVDGIFVGPSDLAAALGHLGNASHPDVQQTIQHIFARAKAHGKPCGILAPVEADARRYLEWGATFVAVGSDLGAFRASTQKLADTFKK</sequence>